<organism>
    <name type="scientific">Schizosaccharomyces pombe (strain 972 / ATCC 24843)</name>
    <name type="common">Fission yeast</name>
    <dbReference type="NCBI Taxonomy" id="284812"/>
    <lineage>
        <taxon>Eukaryota</taxon>
        <taxon>Fungi</taxon>
        <taxon>Dikarya</taxon>
        <taxon>Ascomycota</taxon>
        <taxon>Taphrinomycotina</taxon>
        <taxon>Schizosaccharomycetes</taxon>
        <taxon>Schizosaccharomycetales</taxon>
        <taxon>Schizosaccharomycetaceae</taxon>
        <taxon>Schizosaccharomyces</taxon>
    </lineage>
</organism>
<feature type="chain" id="PRO_0000102786" description="Probable ATP-citrate synthase subunit 1">
    <location>
        <begin position="1"/>
        <end position="615"/>
    </location>
</feature>
<feature type="active site" description="Tele-phosphohistidine intermediate" evidence="1">
    <location>
        <position position="280"/>
    </location>
</feature>
<feature type="binding site" evidence="1">
    <location>
        <begin position="221"/>
        <end position="241"/>
    </location>
    <ligand>
        <name>ATP</name>
        <dbReference type="ChEBI" id="CHEBI:30616"/>
    </ligand>
</feature>
<feature type="binding site" evidence="1">
    <location>
        <position position="238"/>
    </location>
    <ligand>
        <name>Mg(2+)</name>
        <dbReference type="ChEBI" id="CHEBI:18420"/>
    </ligand>
</feature>
<feature type="binding site" evidence="1">
    <location>
        <begin position="272"/>
        <end position="298"/>
    </location>
    <ligand>
        <name>ATP</name>
        <dbReference type="ChEBI" id="CHEBI:30616"/>
    </ligand>
</feature>
<feature type="binding site" evidence="2">
    <location>
        <begin position="299"/>
        <end position="309"/>
    </location>
    <ligand>
        <name>CoA</name>
        <dbReference type="ChEBI" id="CHEBI:57287"/>
    </ligand>
</feature>
<feature type="modified residue" description="Phosphoserine" evidence="3">
    <location>
        <position position="359"/>
    </location>
</feature>
<gene>
    <name type="ORF">SPBC1703.07</name>
</gene>
<dbReference type="EC" id="2.3.3.8"/>
<dbReference type="EMBL" id="CU329671">
    <property type="protein sequence ID" value="CAB66451.1"/>
    <property type="molecule type" value="Genomic_DNA"/>
</dbReference>
<dbReference type="EMBL" id="D89194">
    <property type="protein sequence ID" value="BAA13855.1"/>
    <property type="molecule type" value="mRNA"/>
</dbReference>
<dbReference type="PIR" id="T42753">
    <property type="entry name" value="T42753"/>
</dbReference>
<dbReference type="PIR" id="T50320">
    <property type="entry name" value="T50320"/>
</dbReference>
<dbReference type="SMR" id="Q9P7W3"/>
<dbReference type="BioGRID" id="276425">
    <property type="interactions" value="8"/>
</dbReference>
<dbReference type="FunCoup" id="Q9P7W3">
    <property type="interactions" value="675"/>
</dbReference>
<dbReference type="STRING" id="284812.Q9P7W3"/>
<dbReference type="iPTMnet" id="Q9P7W3"/>
<dbReference type="PaxDb" id="4896-SPBC1703.07.1"/>
<dbReference type="EnsemblFungi" id="SPBC1703.07.1">
    <property type="protein sequence ID" value="SPBC1703.07.1:pep"/>
    <property type="gene ID" value="SPBC1703.07"/>
</dbReference>
<dbReference type="KEGG" id="spo:2539879"/>
<dbReference type="PomBase" id="SPBC1703.07"/>
<dbReference type="VEuPathDB" id="FungiDB:SPBC1703.07"/>
<dbReference type="eggNOG" id="KOG1254">
    <property type="taxonomic scope" value="Eukaryota"/>
</dbReference>
<dbReference type="HOGENOM" id="CLU_006587_4_1_1"/>
<dbReference type="InParanoid" id="Q9P7W3"/>
<dbReference type="OMA" id="HMLRYQA"/>
<dbReference type="PhylomeDB" id="Q9P7W3"/>
<dbReference type="Reactome" id="R-SPO-6798695">
    <property type="pathway name" value="Neutrophil degranulation"/>
</dbReference>
<dbReference type="Reactome" id="R-SPO-75105">
    <property type="pathway name" value="Fatty acyl-CoA biosynthesis"/>
</dbReference>
<dbReference type="PRO" id="PR:Q9P7W3"/>
<dbReference type="Proteomes" id="UP000002485">
    <property type="component" value="Chromosome II"/>
</dbReference>
<dbReference type="GO" id="GO:0005829">
    <property type="term" value="C:cytosol"/>
    <property type="evidence" value="ECO:0007005"/>
    <property type="project" value="PomBase"/>
</dbReference>
<dbReference type="GO" id="GO:0005634">
    <property type="term" value="C:nucleus"/>
    <property type="evidence" value="ECO:0007005"/>
    <property type="project" value="PomBase"/>
</dbReference>
<dbReference type="GO" id="GO:0005524">
    <property type="term" value="F:ATP binding"/>
    <property type="evidence" value="ECO:0007669"/>
    <property type="project" value="UniProtKB-KW"/>
</dbReference>
<dbReference type="GO" id="GO:0003878">
    <property type="term" value="F:ATP citrate synthase activity"/>
    <property type="evidence" value="ECO:0000318"/>
    <property type="project" value="GO_Central"/>
</dbReference>
<dbReference type="GO" id="GO:0046872">
    <property type="term" value="F:metal ion binding"/>
    <property type="evidence" value="ECO:0007669"/>
    <property type="project" value="UniProtKB-KW"/>
</dbReference>
<dbReference type="GO" id="GO:0006085">
    <property type="term" value="P:acetyl-CoA biosynthetic process"/>
    <property type="evidence" value="ECO:0000318"/>
    <property type="project" value="GO_Central"/>
</dbReference>
<dbReference type="GO" id="GO:0006101">
    <property type="term" value="P:citrate metabolic process"/>
    <property type="evidence" value="ECO:0000305"/>
    <property type="project" value="PomBase"/>
</dbReference>
<dbReference type="GO" id="GO:0006633">
    <property type="term" value="P:fatty acid biosynthetic process"/>
    <property type="evidence" value="ECO:0000318"/>
    <property type="project" value="GO_Central"/>
</dbReference>
<dbReference type="CDD" id="cd06100">
    <property type="entry name" value="CCL_ACL-C"/>
    <property type="match status" value="1"/>
</dbReference>
<dbReference type="FunFam" id="3.40.50.261:FF:000003">
    <property type="entry name" value="ATP-citrate synthase subunit"/>
    <property type="match status" value="1"/>
</dbReference>
<dbReference type="FunFam" id="1.10.230.10:FF:000005">
    <property type="entry name" value="ATP-citrate synthase subunit 1"/>
    <property type="match status" value="1"/>
</dbReference>
<dbReference type="FunFam" id="3.40.50.720:FF:000024">
    <property type="entry name" value="Probable ATP-citrate synthase"/>
    <property type="match status" value="1"/>
</dbReference>
<dbReference type="Gene3D" id="1.10.230.10">
    <property type="entry name" value="Cytochrome P450-Terp, domain 2"/>
    <property type="match status" value="1"/>
</dbReference>
<dbReference type="Gene3D" id="3.40.50.720">
    <property type="entry name" value="NAD(P)-binding Rossmann-like Domain"/>
    <property type="match status" value="1"/>
</dbReference>
<dbReference type="Gene3D" id="3.40.50.261">
    <property type="entry name" value="Succinyl-CoA synthetase domains"/>
    <property type="match status" value="1"/>
</dbReference>
<dbReference type="InterPro" id="IPR016143">
    <property type="entry name" value="Citrate_synth-like_sm_a-sub"/>
</dbReference>
<dbReference type="InterPro" id="IPR002020">
    <property type="entry name" value="Citrate_synthase"/>
</dbReference>
<dbReference type="InterPro" id="IPR036969">
    <property type="entry name" value="Citrate_synthase_sf"/>
</dbReference>
<dbReference type="InterPro" id="IPR033847">
    <property type="entry name" value="Citrt_syn/SCS-alpha_CS"/>
</dbReference>
<dbReference type="InterPro" id="IPR003781">
    <property type="entry name" value="CoA-bd"/>
</dbReference>
<dbReference type="InterPro" id="IPR036291">
    <property type="entry name" value="NAD(P)-bd_dom_sf"/>
</dbReference>
<dbReference type="InterPro" id="IPR017866">
    <property type="entry name" value="Succ-CoA_synthase_bsu_CS"/>
</dbReference>
<dbReference type="InterPro" id="IPR005811">
    <property type="entry name" value="SUCC_ACL_C"/>
</dbReference>
<dbReference type="InterPro" id="IPR016102">
    <property type="entry name" value="Succinyl-CoA_synth-like"/>
</dbReference>
<dbReference type="PANTHER" id="PTHR23118">
    <property type="entry name" value="ATP-CITRATE SYNTHASE"/>
    <property type="match status" value="1"/>
</dbReference>
<dbReference type="PANTHER" id="PTHR23118:SF42">
    <property type="entry name" value="ATP-CITRATE SYNTHASE"/>
    <property type="match status" value="1"/>
</dbReference>
<dbReference type="Pfam" id="PF00285">
    <property type="entry name" value="Citrate_synt"/>
    <property type="match status" value="1"/>
</dbReference>
<dbReference type="Pfam" id="PF02629">
    <property type="entry name" value="CoA_binding"/>
    <property type="match status" value="1"/>
</dbReference>
<dbReference type="Pfam" id="PF00549">
    <property type="entry name" value="Ligase_CoA"/>
    <property type="match status" value="1"/>
</dbReference>
<dbReference type="SMART" id="SM00881">
    <property type="entry name" value="CoA_binding"/>
    <property type="match status" value="1"/>
</dbReference>
<dbReference type="SUPFAM" id="SSF48256">
    <property type="entry name" value="Citrate synthase"/>
    <property type="match status" value="1"/>
</dbReference>
<dbReference type="SUPFAM" id="SSF51735">
    <property type="entry name" value="NAD(P)-binding Rossmann-fold domains"/>
    <property type="match status" value="1"/>
</dbReference>
<dbReference type="PROSITE" id="PS01216">
    <property type="entry name" value="SUCCINYL_COA_LIG_1"/>
    <property type="match status" value="1"/>
</dbReference>
<dbReference type="PROSITE" id="PS01217">
    <property type="entry name" value="SUCCINYL_COA_LIG_3"/>
    <property type="match status" value="1"/>
</dbReference>
<proteinExistence type="evidence at protein level"/>
<sequence length="615" mass="67204">MAGSVDKPSYELFSKDTRAFVYGMQTKAVQGMLDFDYMCGRTVPSVAAIIYTFGSQSISKLYWGTKEILLPVYRTIEEACTKHPEVDVVVNFASSRSAYASTMELMEFPQIRCIAIIAEGVPERRAREILVTSKEKNVVIIGPATVGGIKPGCFKIGNTGGMMDNIVASKLYRPGSVAYVSKSGGMSNELNNIISHTTDGVYEGIAIGGDRYPGTTFIDHLIRFEADPACKLMVLLGEVGGVEEYRVIEAVKNGTIKKPIVAWAIGTCSSMFKTEVQFGHAGSFANSELETAVAKNQAMREAGIYVPETFEKLPALLQEVYEGLVKKGVIVPQPEVAPPNIPLDYAWAKELGLVRKPSSFICTISNDRGSELTYNNVPISKVFEEELGIGGVISLLWLRRRLPSYATKFLEMVLQLTADHGPCVSGAMNTIITTRAGKDLISSLVAGLLTIGTRFGGALDGAAQEFSKAYDAGLSPRAFVDSCRKANKLIPGIGHRIKSRNNPDLRVELVKGYVKKNFPSTKLLDYALAVENVTTSKKDNLILNVDGCIAVCFVDLLRNCGAFTLEEANEYINLGILNGMFVLGRSIGLIGHHLDQKRLRAPLYRHPWDDFLYLS</sequence>
<comment type="function">
    <text evidence="1">Catalyzes the formation of cytosolic acetyl-CoA, which is mainly used for the biosynthesis of fatty acids and sterols.</text>
</comment>
<comment type="catalytic activity">
    <reaction>
        <text>oxaloacetate + acetyl-CoA + ADP + phosphate = citrate + ATP + CoA</text>
        <dbReference type="Rhea" id="RHEA:21160"/>
        <dbReference type="ChEBI" id="CHEBI:16452"/>
        <dbReference type="ChEBI" id="CHEBI:16947"/>
        <dbReference type="ChEBI" id="CHEBI:30616"/>
        <dbReference type="ChEBI" id="CHEBI:43474"/>
        <dbReference type="ChEBI" id="CHEBI:57287"/>
        <dbReference type="ChEBI" id="CHEBI:57288"/>
        <dbReference type="ChEBI" id="CHEBI:456216"/>
        <dbReference type="EC" id="2.3.3.8"/>
    </reaction>
</comment>
<comment type="subunit">
    <text evidence="1">Composed of two subunits.</text>
</comment>
<comment type="subcellular location">
    <subcellularLocation>
        <location evidence="1">Cytoplasm</location>
    </subcellularLocation>
</comment>
<comment type="similarity">
    <text evidence="4">Belongs to the succinate/malate CoA ligase alpha subunit family.</text>
</comment>
<name>ACL1_SCHPO</name>
<protein>
    <recommendedName>
        <fullName>Probable ATP-citrate synthase subunit 1</fullName>
        <ecNumber>2.3.3.8</ecNumber>
    </recommendedName>
    <alternativeName>
        <fullName>ATP-citrate (pro-S-)-lyase 1</fullName>
    </alternativeName>
    <alternativeName>
        <fullName>Citrate cleavage enzyme subunit 1</fullName>
    </alternativeName>
</protein>
<evidence type="ECO:0000250" key="1"/>
<evidence type="ECO:0000255" key="2"/>
<evidence type="ECO:0000269" key="3">
    <source>
    </source>
</evidence>
<evidence type="ECO:0000305" key="4"/>
<accession>Q9P7W3</accession>
<accession>P78844</accession>
<keyword id="KW-0067">ATP-binding</keyword>
<keyword id="KW-0963">Cytoplasm</keyword>
<keyword id="KW-0444">Lipid biosynthesis</keyword>
<keyword id="KW-0443">Lipid metabolism</keyword>
<keyword id="KW-0460">Magnesium</keyword>
<keyword id="KW-0479">Metal-binding</keyword>
<keyword id="KW-0547">Nucleotide-binding</keyword>
<keyword id="KW-0597">Phosphoprotein</keyword>
<keyword id="KW-1185">Reference proteome</keyword>
<keyword id="KW-0808">Transferase</keyword>
<reference key="1">
    <citation type="journal article" date="2002" name="Nature">
        <title>The genome sequence of Schizosaccharomyces pombe.</title>
        <authorList>
            <person name="Wood V."/>
            <person name="Gwilliam R."/>
            <person name="Rajandream M.A."/>
            <person name="Lyne M.H."/>
            <person name="Lyne R."/>
            <person name="Stewart A."/>
            <person name="Sgouros J.G."/>
            <person name="Peat N."/>
            <person name="Hayles J."/>
            <person name="Baker S.G."/>
            <person name="Basham D."/>
            <person name="Bowman S."/>
            <person name="Brooks K."/>
            <person name="Brown D."/>
            <person name="Brown S."/>
            <person name="Chillingworth T."/>
            <person name="Churcher C.M."/>
            <person name="Collins M."/>
            <person name="Connor R."/>
            <person name="Cronin A."/>
            <person name="Davis P."/>
            <person name="Feltwell T."/>
            <person name="Fraser A."/>
            <person name="Gentles S."/>
            <person name="Goble A."/>
            <person name="Hamlin N."/>
            <person name="Harris D.E."/>
            <person name="Hidalgo J."/>
            <person name="Hodgson G."/>
            <person name="Holroyd S."/>
            <person name="Hornsby T."/>
            <person name="Howarth S."/>
            <person name="Huckle E.J."/>
            <person name="Hunt S."/>
            <person name="Jagels K."/>
            <person name="James K.D."/>
            <person name="Jones L."/>
            <person name="Jones M."/>
            <person name="Leather S."/>
            <person name="McDonald S."/>
            <person name="McLean J."/>
            <person name="Mooney P."/>
            <person name="Moule S."/>
            <person name="Mungall K.L."/>
            <person name="Murphy L.D."/>
            <person name="Niblett D."/>
            <person name="Odell C."/>
            <person name="Oliver K."/>
            <person name="O'Neil S."/>
            <person name="Pearson D."/>
            <person name="Quail M.A."/>
            <person name="Rabbinowitsch E."/>
            <person name="Rutherford K.M."/>
            <person name="Rutter S."/>
            <person name="Saunders D."/>
            <person name="Seeger K."/>
            <person name="Sharp S."/>
            <person name="Skelton J."/>
            <person name="Simmonds M.N."/>
            <person name="Squares R."/>
            <person name="Squares S."/>
            <person name="Stevens K."/>
            <person name="Taylor K."/>
            <person name="Taylor R.G."/>
            <person name="Tivey A."/>
            <person name="Walsh S.V."/>
            <person name="Warren T."/>
            <person name="Whitehead S."/>
            <person name="Woodward J.R."/>
            <person name="Volckaert G."/>
            <person name="Aert R."/>
            <person name="Robben J."/>
            <person name="Grymonprez B."/>
            <person name="Weltjens I."/>
            <person name="Vanstreels E."/>
            <person name="Rieger M."/>
            <person name="Schaefer M."/>
            <person name="Mueller-Auer S."/>
            <person name="Gabel C."/>
            <person name="Fuchs M."/>
            <person name="Duesterhoeft A."/>
            <person name="Fritzc C."/>
            <person name="Holzer E."/>
            <person name="Moestl D."/>
            <person name="Hilbert H."/>
            <person name="Borzym K."/>
            <person name="Langer I."/>
            <person name="Beck A."/>
            <person name="Lehrach H."/>
            <person name="Reinhardt R."/>
            <person name="Pohl T.M."/>
            <person name="Eger P."/>
            <person name="Zimmermann W."/>
            <person name="Wedler H."/>
            <person name="Wambutt R."/>
            <person name="Purnelle B."/>
            <person name="Goffeau A."/>
            <person name="Cadieu E."/>
            <person name="Dreano S."/>
            <person name="Gloux S."/>
            <person name="Lelaure V."/>
            <person name="Mottier S."/>
            <person name="Galibert F."/>
            <person name="Aves S.J."/>
            <person name="Xiang Z."/>
            <person name="Hunt C."/>
            <person name="Moore K."/>
            <person name="Hurst S.M."/>
            <person name="Lucas M."/>
            <person name="Rochet M."/>
            <person name="Gaillardin C."/>
            <person name="Tallada V.A."/>
            <person name="Garzon A."/>
            <person name="Thode G."/>
            <person name="Daga R.R."/>
            <person name="Cruzado L."/>
            <person name="Jimenez J."/>
            <person name="Sanchez M."/>
            <person name="del Rey F."/>
            <person name="Benito J."/>
            <person name="Dominguez A."/>
            <person name="Revuelta J.L."/>
            <person name="Moreno S."/>
            <person name="Armstrong J."/>
            <person name="Forsburg S.L."/>
            <person name="Cerutti L."/>
            <person name="Lowe T."/>
            <person name="McCombie W.R."/>
            <person name="Paulsen I."/>
            <person name="Potashkin J."/>
            <person name="Shpakovski G.V."/>
            <person name="Ussery D."/>
            <person name="Barrell B.G."/>
            <person name="Nurse P."/>
        </authorList>
    </citation>
    <scope>NUCLEOTIDE SEQUENCE [LARGE SCALE GENOMIC DNA]</scope>
    <source>
        <strain>972 / ATCC 24843</strain>
    </source>
</reference>
<reference key="2">
    <citation type="journal article" date="1997" name="DNA Res.">
        <title>Identification of open reading frames in Schizosaccharomyces pombe cDNAs.</title>
        <authorList>
            <person name="Yoshioka S."/>
            <person name="Kato K."/>
            <person name="Nakai K."/>
            <person name="Okayama H."/>
            <person name="Nojima H."/>
        </authorList>
    </citation>
    <scope>NUCLEOTIDE SEQUENCE [LARGE SCALE MRNA] OF 293-615</scope>
    <source>
        <strain>PR745</strain>
    </source>
</reference>
<reference key="3">
    <citation type="journal article" date="2008" name="J. Proteome Res.">
        <title>Phosphoproteome analysis of fission yeast.</title>
        <authorList>
            <person name="Wilson-Grady J.T."/>
            <person name="Villen J."/>
            <person name="Gygi S.P."/>
        </authorList>
    </citation>
    <scope>PHOSPHORYLATION [LARGE SCALE ANALYSIS] AT SER-359</scope>
    <scope>IDENTIFICATION BY MASS SPECTROMETRY</scope>
</reference>